<sequence>MDIKRTVLWVIFFMSAVMLFDNWQRSHGRPSMFFPNVTQTNTASNATNGNGASGASAAAAANALPAAATGAAPATTAPAAQAQLVRFSTDVYNGEIDTRGGTLAKLTLTKAGDGKQPDLSVTLFDHTANHTYLARTGLLGGDFPNHNDVYAQVAGPTSLAADQNTLKLSFESPVKGGVKVVKTYTFTRGSYVIGVDTKIENVGAAPVTPSVYMELVRDNSSVETPMFSHTFLGPAVYTDQKHFQKITFGDIDKNKADYVTSADNGWIAMVQHYFASAWIPQSGAKRDIYVEKIDPTLYRVGVKQPVAAIAPGQSADVSARLFAGPEEERMLEGIAPGLELVKDYGWVTIIAKPLFWLLEKIHGFVGNWGWAIVLLTLLIKAVFFPLSAASYKSMARMKEITPRMQALRERFKSDPQKMNAALMELYKTEKVNPFGGCLPVVIQIPVFISLYWVLLASVEMRGAPWVLWIHDLSQRDPYFILPVLMAVSMFVQTKLNPTPPDPVQAKMMMFMPIAFSVMFFFFPAGLVLYYVVNNVLSIAQQYYITRTLGGAAAKKKAS</sequence>
<comment type="function">
    <text evidence="1">Required for the insertion and/or proper folding and/or complex formation of integral membrane proteins into the membrane. Involved in integration of membrane proteins that insert both dependently and independently of the Sec translocase complex, as well as at least some lipoproteins. Aids folding of multispanning membrane proteins.</text>
</comment>
<comment type="subunit">
    <text evidence="1">Interacts with the Sec translocase complex via SecD. Specifically interacts with transmembrane segments of nascent integral membrane proteins during membrane integration.</text>
</comment>
<comment type="subcellular location">
    <subcellularLocation>
        <location evidence="1">Cell inner membrane</location>
        <topology evidence="1">Multi-pass membrane protein</topology>
    </subcellularLocation>
</comment>
<comment type="similarity">
    <text evidence="1">Belongs to the OXA1/ALB3/YidC family. Type 1 subfamily.</text>
</comment>
<accession>A3NPX1</accession>
<name>YIDC_BURP0</name>
<reference key="1">
    <citation type="journal article" date="2010" name="Genome Biol. Evol.">
        <title>Continuing evolution of Burkholderia mallei through genome reduction and large-scale rearrangements.</title>
        <authorList>
            <person name="Losada L."/>
            <person name="Ronning C.M."/>
            <person name="DeShazer D."/>
            <person name="Woods D."/>
            <person name="Fedorova N."/>
            <person name="Kim H.S."/>
            <person name="Shabalina S.A."/>
            <person name="Pearson T.R."/>
            <person name="Brinkac L."/>
            <person name="Tan P."/>
            <person name="Nandi T."/>
            <person name="Crabtree J."/>
            <person name="Badger J."/>
            <person name="Beckstrom-Sternberg S."/>
            <person name="Saqib M."/>
            <person name="Schutzer S.E."/>
            <person name="Keim P."/>
            <person name="Nierman W.C."/>
        </authorList>
    </citation>
    <scope>NUCLEOTIDE SEQUENCE [LARGE SCALE GENOMIC DNA]</scope>
    <source>
        <strain>1106a</strain>
    </source>
</reference>
<proteinExistence type="inferred from homology"/>
<organism>
    <name type="scientific">Burkholderia pseudomallei (strain 1106a)</name>
    <dbReference type="NCBI Taxonomy" id="357348"/>
    <lineage>
        <taxon>Bacteria</taxon>
        <taxon>Pseudomonadati</taxon>
        <taxon>Pseudomonadota</taxon>
        <taxon>Betaproteobacteria</taxon>
        <taxon>Burkholderiales</taxon>
        <taxon>Burkholderiaceae</taxon>
        <taxon>Burkholderia</taxon>
        <taxon>pseudomallei group</taxon>
    </lineage>
</organism>
<gene>
    <name evidence="1" type="primary">yidC</name>
    <name type="ordered locus">BURPS1106A_0107</name>
</gene>
<evidence type="ECO:0000255" key="1">
    <source>
        <dbReference type="HAMAP-Rule" id="MF_01810"/>
    </source>
</evidence>
<keyword id="KW-0997">Cell inner membrane</keyword>
<keyword id="KW-1003">Cell membrane</keyword>
<keyword id="KW-0143">Chaperone</keyword>
<keyword id="KW-0472">Membrane</keyword>
<keyword id="KW-0653">Protein transport</keyword>
<keyword id="KW-0812">Transmembrane</keyword>
<keyword id="KW-1133">Transmembrane helix</keyword>
<keyword id="KW-0813">Transport</keyword>
<feature type="chain" id="PRO_1000070071" description="Membrane protein insertase YidC">
    <location>
        <begin position="1"/>
        <end position="558"/>
    </location>
</feature>
<feature type="transmembrane region" description="Helical" evidence="1">
    <location>
        <begin position="3"/>
        <end position="23"/>
    </location>
</feature>
<feature type="transmembrane region" description="Helical" evidence="1">
    <location>
        <begin position="364"/>
        <end position="384"/>
    </location>
</feature>
<feature type="transmembrane region" description="Helical" evidence="1">
    <location>
        <begin position="438"/>
        <end position="458"/>
    </location>
</feature>
<feature type="transmembrane region" description="Helical" evidence="1">
    <location>
        <begin position="477"/>
        <end position="497"/>
    </location>
</feature>
<feature type="transmembrane region" description="Helical" evidence="1">
    <location>
        <begin position="508"/>
        <end position="528"/>
    </location>
</feature>
<protein>
    <recommendedName>
        <fullName evidence="1">Membrane protein insertase YidC</fullName>
    </recommendedName>
    <alternativeName>
        <fullName evidence="1">Foldase YidC</fullName>
    </alternativeName>
    <alternativeName>
        <fullName evidence="1">Membrane integrase YidC</fullName>
    </alternativeName>
    <alternativeName>
        <fullName evidence="1">Membrane protein YidC</fullName>
    </alternativeName>
</protein>
<dbReference type="EMBL" id="CP000572">
    <property type="protein sequence ID" value="ABN90629.1"/>
    <property type="molecule type" value="Genomic_DNA"/>
</dbReference>
<dbReference type="RefSeq" id="WP_004524584.1">
    <property type="nucleotide sequence ID" value="NC_009076.1"/>
</dbReference>
<dbReference type="SMR" id="A3NPX1"/>
<dbReference type="GeneID" id="93058590"/>
<dbReference type="KEGG" id="bpl:BURPS1106A_0107"/>
<dbReference type="HOGENOM" id="CLU_016535_3_0_4"/>
<dbReference type="Proteomes" id="UP000006738">
    <property type="component" value="Chromosome I"/>
</dbReference>
<dbReference type="GO" id="GO:0005886">
    <property type="term" value="C:plasma membrane"/>
    <property type="evidence" value="ECO:0007669"/>
    <property type="project" value="UniProtKB-SubCell"/>
</dbReference>
<dbReference type="GO" id="GO:0032977">
    <property type="term" value="F:membrane insertase activity"/>
    <property type="evidence" value="ECO:0007669"/>
    <property type="project" value="InterPro"/>
</dbReference>
<dbReference type="GO" id="GO:0051205">
    <property type="term" value="P:protein insertion into membrane"/>
    <property type="evidence" value="ECO:0007669"/>
    <property type="project" value="TreeGrafter"/>
</dbReference>
<dbReference type="GO" id="GO:0015031">
    <property type="term" value="P:protein transport"/>
    <property type="evidence" value="ECO:0007669"/>
    <property type="project" value="UniProtKB-KW"/>
</dbReference>
<dbReference type="CDD" id="cd20070">
    <property type="entry name" value="5TM_YidC_Alb3"/>
    <property type="match status" value="1"/>
</dbReference>
<dbReference type="CDD" id="cd19961">
    <property type="entry name" value="EcYidC-like_peri"/>
    <property type="match status" value="1"/>
</dbReference>
<dbReference type="Gene3D" id="2.70.98.90">
    <property type="match status" value="1"/>
</dbReference>
<dbReference type="HAMAP" id="MF_01810">
    <property type="entry name" value="YidC_type1"/>
    <property type="match status" value="1"/>
</dbReference>
<dbReference type="InterPro" id="IPR019998">
    <property type="entry name" value="Membr_insert_YidC"/>
</dbReference>
<dbReference type="InterPro" id="IPR028053">
    <property type="entry name" value="Membr_insert_YidC_N"/>
</dbReference>
<dbReference type="InterPro" id="IPR001708">
    <property type="entry name" value="YidC/ALB3/OXA1/COX18"/>
</dbReference>
<dbReference type="InterPro" id="IPR028055">
    <property type="entry name" value="YidC/Oxa/ALB_C"/>
</dbReference>
<dbReference type="InterPro" id="IPR047196">
    <property type="entry name" value="YidC_ALB_C"/>
</dbReference>
<dbReference type="InterPro" id="IPR038221">
    <property type="entry name" value="YidC_periplasmic_sf"/>
</dbReference>
<dbReference type="NCBIfam" id="NF002352">
    <property type="entry name" value="PRK01318.1-3"/>
    <property type="match status" value="1"/>
</dbReference>
<dbReference type="NCBIfam" id="NF002353">
    <property type="entry name" value="PRK01318.1-4"/>
    <property type="match status" value="1"/>
</dbReference>
<dbReference type="NCBIfam" id="TIGR03593">
    <property type="entry name" value="yidC_nterm"/>
    <property type="match status" value="1"/>
</dbReference>
<dbReference type="NCBIfam" id="TIGR03592">
    <property type="entry name" value="yidC_oxa1_cterm"/>
    <property type="match status" value="1"/>
</dbReference>
<dbReference type="PANTHER" id="PTHR12428:SF65">
    <property type="entry name" value="CYTOCHROME C OXIDASE ASSEMBLY PROTEIN COX18, MITOCHONDRIAL"/>
    <property type="match status" value="1"/>
</dbReference>
<dbReference type="PANTHER" id="PTHR12428">
    <property type="entry name" value="OXA1"/>
    <property type="match status" value="1"/>
</dbReference>
<dbReference type="Pfam" id="PF02096">
    <property type="entry name" value="60KD_IMP"/>
    <property type="match status" value="1"/>
</dbReference>
<dbReference type="Pfam" id="PF14849">
    <property type="entry name" value="YidC_periplas"/>
    <property type="match status" value="1"/>
</dbReference>
<dbReference type="PRINTS" id="PR00701">
    <property type="entry name" value="60KDINNERMP"/>
</dbReference>
<dbReference type="PRINTS" id="PR01900">
    <property type="entry name" value="YIDCPROTEIN"/>
</dbReference>